<feature type="chain" id="PRO_0000182871" description="Deoxyuridine 5'-triphosphate nucleotidohydrolase">
    <location>
        <begin position="1"/>
        <end position="151"/>
    </location>
</feature>
<feature type="binding site" evidence="1">
    <location>
        <begin position="70"/>
        <end position="72"/>
    </location>
    <ligand>
        <name>substrate</name>
    </ligand>
</feature>
<feature type="binding site" evidence="1">
    <location>
        <position position="83"/>
    </location>
    <ligand>
        <name>substrate</name>
    </ligand>
</feature>
<feature type="binding site" evidence="1">
    <location>
        <begin position="87"/>
        <end position="89"/>
    </location>
    <ligand>
        <name>substrate</name>
    </ligand>
</feature>
<feature type="binding site" evidence="1">
    <location>
        <position position="97"/>
    </location>
    <ligand>
        <name>substrate</name>
    </ligand>
</feature>
<reference key="1">
    <citation type="journal article" date="2004" name="Proc. Natl. Acad. Sci. U.S.A.">
        <title>Genome sequence of the deep-sea gamma-proteobacterium Idiomarina loihiensis reveals amino acid fermentation as a source of carbon and energy.</title>
        <authorList>
            <person name="Hou S."/>
            <person name="Saw J.H."/>
            <person name="Lee K.S."/>
            <person name="Freitas T.A."/>
            <person name="Belisle C."/>
            <person name="Kawarabayasi Y."/>
            <person name="Donachie S.P."/>
            <person name="Pikina A."/>
            <person name="Galperin M.Y."/>
            <person name="Koonin E.V."/>
            <person name="Makarova K.S."/>
            <person name="Omelchenko M.V."/>
            <person name="Sorokin A."/>
            <person name="Wolf Y.I."/>
            <person name="Li Q.X."/>
            <person name="Keum Y.S."/>
            <person name="Campbell S."/>
            <person name="Denery J."/>
            <person name="Aizawa S."/>
            <person name="Shibata S."/>
            <person name="Malahoff A."/>
            <person name="Alam M."/>
        </authorList>
    </citation>
    <scope>NUCLEOTIDE SEQUENCE [LARGE SCALE GENOMIC DNA]</scope>
    <source>
        <strain>ATCC BAA-735 / DSM 15497 / L2-TR</strain>
    </source>
</reference>
<comment type="function">
    <text evidence="1">This enzyme is involved in nucleotide metabolism: it produces dUMP, the immediate precursor of thymidine nucleotides and it decreases the intracellular concentration of dUTP so that uracil cannot be incorporated into DNA.</text>
</comment>
<comment type="catalytic activity">
    <reaction evidence="1">
        <text>dUTP + H2O = dUMP + diphosphate + H(+)</text>
        <dbReference type="Rhea" id="RHEA:10248"/>
        <dbReference type="ChEBI" id="CHEBI:15377"/>
        <dbReference type="ChEBI" id="CHEBI:15378"/>
        <dbReference type="ChEBI" id="CHEBI:33019"/>
        <dbReference type="ChEBI" id="CHEBI:61555"/>
        <dbReference type="ChEBI" id="CHEBI:246422"/>
        <dbReference type="EC" id="3.6.1.23"/>
    </reaction>
</comment>
<comment type="cofactor">
    <cofactor evidence="1">
        <name>Mg(2+)</name>
        <dbReference type="ChEBI" id="CHEBI:18420"/>
    </cofactor>
</comment>
<comment type="pathway">
    <text evidence="1">Pyrimidine metabolism; dUMP biosynthesis; dUMP from dCTP (dUTP route): step 2/2.</text>
</comment>
<comment type="similarity">
    <text evidence="1">Belongs to the dUTPase family.</text>
</comment>
<gene>
    <name evidence="1" type="primary">dut</name>
    <name type="ordered locus">IL0238</name>
</gene>
<name>DUT_IDILO</name>
<evidence type="ECO:0000255" key="1">
    <source>
        <dbReference type="HAMAP-Rule" id="MF_00116"/>
    </source>
</evidence>
<keyword id="KW-0378">Hydrolase</keyword>
<keyword id="KW-0460">Magnesium</keyword>
<keyword id="KW-0479">Metal-binding</keyword>
<keyword id="KW-0546">Nucleotide metabolism</keyword>
<keyword id="KW-1185">Reference proteome</keyword>
<proteinExistence type="inferred from homology"/>
<accession>Q5QZB6</accession>
<protein>
    <recommendedName>
        <fullName evidence="1">Deoxyuridine 5'-triphosphate nucleotidohydrolase</fullName>
        <shortName evidence="1">dUTPase</shortName>
        <ecNumber evidence="1">3.6.1.23</ecNumber>
    </recommendedName>
    <alternativeName>
        <fullName evidence="1">dUTP pyrophosphatase</fullName>
    </alternativeName>
</protein>
<sequence>MTQVEVKILDDRIGQSIPLPEYATQGSAGMDLRACLDQPLTIEPGQTQLIGTGIAMYIGDPNYAATILPRSGLGHKHGLVLGNLVGLIDSDYQGELKVSCWNRSNQAYTIEPGDRIAQLVILPVVQAQMSIVEEFHETDRGEGGFGHSGRS</sequence>
<organism>
    <name type="scientific">Idiomarina loihiensis (strain ATCC BAA-735 / DSM 15497 / L2-TR)</name>
    <dbReference type="NCBI Taxonomy" id="283942"/>
    <lineage>
        <taxon>Bacteria</taxon>
        <taxon>Pseudomonadati</taxon>
        <taxon>Pseudomonadota</taxon>
        <taxon>Gammaproteobacteria</taxon>
        <taxon>Alteromonadales</taxon>
        <taxon>Idiomarinaceae</taxon>
        <taxon>Idiomarina</taxon>
    </lineage>
</organism>
<dbReference type="EC" id="3.6.1.23" evidence="1"/>
<dbReference type="EMBL" id="AE017340">
    <property type="protein sequence ID" value="AAV81081.1"/>
    <property type="molecule type" value="Genomic_DNA"/>
</dbReference>
<dbReference type="RefSeq" id="WP_011233501.1">
    <property type="nucleotide sequence ID" value="NC_006512.1"/>
</dbReference>
<dbReference type="SMR" id="Q5QZB6"/>
<dbReference type="STRING" id="283942.IL0238"/>
<dbReference type="GeneID" id="41335384"/>
<dbReference type="KEGG" id="ilo:IL0238"/>
<dbReference type="eggNOG" id="COG0756">
    <property type="taxonomic scope" value="Bacteria"/>
</dbReference>
<dbReference type="HOGENOM" id="CLU_068508_1_1_6"/>
<dbReference type="OrthoDB" id="9809956at2"/>
<dbReference type="UniPathway" id="UPA00610">
    <property type="reaction ID" value="UER00666"/>
</dbReference>
<dbReference type="Proteomes" id="UP000001171">
    <property type="component" value="Chromosome"/>
</dbReference>
<dbReference type="GO" id="GO:0004170">
    <property type="term" value="F:dUTP diphosphatase activity"/>
    <property type="evidence" value="ECO:0007669"/>
    <property type="project" value="UniProtKB-UniRule"/>
</dbReference>
<dbReference type="GO" id="GO:0000287">
    <property type="term" value="F:magnesium ion binding"/>
    <property type="evidence" value="ECO:0007669"/>
    <property type="project" value="UniProtKB-UniRule"/>
</dbReference>
<dbReference type="GO" id="GO:0006226">
    <property type="term" value="P:dUMP biosynthetic process"/>
    <property type="evidence" value="ECO:0007669"/>
    <property type="project" value="UniProtKB-UniRule"/>
</dbReference>
<dbReference type="GO" id="GO:0046081">
    <property type="term" value="P:dUTP catabolic process"/>
    <property type="evidence" value="ECO:0007669"/>
    <property type="project" value="InterPro"/>
</dbReference>
<dbReference type="CDD" id="cd07557">
    <property type="entry name" value="trimeric_dUTPase"/>
    <property type="match status" value="1"/>
</dbReference>
<dbReference type="FunFam" id="2.70.40.10:FF:000002">
    <property type="entry name" value="dUTP diphosphatase"/>
    <property type="match status" value="1"/>
</dbReference>
<dbReference type="Gene3D" id="2.70.40.10">
    <property type="match status" value="1"/>
</dbReference>
<dbReference type="HAMAP" id="MF_00116">
    <property type="entry name" value="dUTPase_bact"/>
    <property type="match status" value="1"/>
</dbReference>
<dbReference type="InterPro" id="IPR008181">
    <property type="entry name" value="dUTPase"/>
</dbReference>
<dbReference type="InterPro" id="IPR029054">
    <property type="entry name" value="dUTPase-like"/>
</dbReference>
<dbReference type="InterPro" id="IPR036157">
    <property type="entry name" value="dUTPase-like_sf"/>
</dbReference>
<dbReference type="InterPro" id="IPR033704">
    <property type="entry name" value="dUTPase_trimeric"/>
</dbReference>
<dbReference type="NCBIfam" id="TIGR00576">
    <property type="entry name" value="dut"/>
    <property type="match status" value="1"/>
</dbReference>
<dbReference type="NCBIfam" id="NF001862">
    <property type="entry name" value="PRK00601.1"/>
    <property type="match status" value="1"/>
</dbReference>
<dbReference type="PANTHER" id="PTHR11241">
    <property type="entry name" value="DEOXYURIDINE 5'-TRIPHOSPHATE NUCLEOTIDOHYDROLASE"/>
    <property type="match status" value="1"/>
</dbReference>
<dbReference type="PANTHER" id="PTHR11241:SF0">
    <property type="entry name" value="DEOXYURIDINE 5'-TRIPHOSPHATE NUCLEOTIDOHYDROLASE"/>
    <property type="match status" value="1"/>
</dbReference>
<dbReference type="Pfam" id="PF00692">
    <property type="entry name" value="dUTPase"/>
    <property type="match status" value="1"/>
</dbReference>
<dbReference type="SUPFAM" id="SSF51283">
    <property type="entry name" value="dUTPase-like"/>
    <property type="match status" value="1"/>
</dbReference>